<comment type="function">
    <text evidence="1">Catalyzes the transfer of a phosphate group to glutamate to form L-glutamate 5-phosphate.</text>
</comment>
<comment type="catalytic activity">
    <reaction evidence="1">
        <text>L-glutamate + ATP = L-glutamyl 5-phosphate + ADP</text>
        <dbReference type="Rhea" id="RHEA:14877"/>
        <dbReference type="ChEBI" id="CHEBI:29985"/>
        <dbReference type="ChEBI" id="CHEBI:30616"/>
        <dbReference type="ChEBI" id="CHEBI:58274"/>
        <dbReference type="ChEBI" id="CHEBI:456216"/>
        <dbReference type="EC" id="2.7.2.11"/>
    </reaction>
</comment>
<comment type="pathway">
    <text evidence="1">Amino-acid biosynthesis; L-proline biosynthesis; L-glutamate 5-semialdehyde from L-glutamate: step 1/2.</text>
</comment>
<comment type="subcellular location">
    <subcellularLocation>
        <location evidence="1">Cytoplasm</location>
    </subcellularLocation>
</comment>
<comment type="similarity">
    <text evidence="1">Belongs to the glutamate 5-kinase family.</text>
</comment>
<proteinExistence type="inferred from homology"/>
<name>PROB_VARPS</name>
<evidence type="ECO:0000255" key="1">
    <source>
        <dbReference type="HAMAP-Rule" id="MF_00456"/>
    </source>
</evidence>
<accession>C5CXX2</accession>
<keyword id="KW-0028">Amino-acid biosynthesis</keyword>
<keyword id="KW-0067">ATP-binding</keyword>
<keyword id="KW-0963">Cytoplasm</keyword>
<keyword id="KW-0418">Kinase</keyword>
<keyword id="KW-0547">Nucleotide-binding</keyword>
<keyword id="KW-0641">Proline biosynthesis</keyword>
<keyword id="KW-0808">Transferase</keyword>
<reference key="1">
    <citation type="journal article" date="2011" name="J. Bacteriol.">
        <title>Complete genome sequence of the metabolically versatile plant growth-promoting endophyte, Variovorax paradoxus S110.</title>
        <authorList>
            <person name="Han J.I."/>
            <person name="Choi H.K."/>
            <person name="Lee S.W."/>
            <person name="Orwin P.M."/>
            <person name="Kim J."/>
            <person name="Laroe S.L."/>
            <person name="Kim T.G."/>
            <person name="O'Neil J."/>
            <person name="Leadbetter J.R."/>
            <person name="Lee S.Y."/>
            <person name="Hur C.G."/>
            <person name="Spain J.C."/>
            <person name="Ovchinnikova G."/>
            <person name="Goodwin L."/>
            <person name="Han C."/>
        </authorList>
    </citation>
    <scope>NUCLEOTIDE SEQUENCE [LARGE SCALE GENOMIC DNA]</scope>
    <source>
        <strain>S110</strain>
    </source>
</reference>
<protein>
    <recommendedName>
        <fullName evidence="1">Glutamate 5-kinase</fullName>
        <ecNumber evidence="1">2.7.2.11</ecNumber>
    </recommendedName>
    <alternativeName>
        <fullName evidence="1">Gamma-glutamyl kinase</fullName>
        <shortName evidence="1">GK</shortName>
    </alternativeName>
</protein>
<dbReference type="EC" id="2.7.2.11" evidence="1"/>
<dbReference type="EMBL" id="CP001635">
    <property type="protein sequence ID" value="ACS20828.1"/>
    <property type="molecule type" value="Genomic_DNA"/>
</dbReference>
<dbReference type="SMR" id="C5CXX2"/>
<dbReference type="STRING" id="543728.Vapar_4215"/>
<dbReference type="KEGG" id="vap:Vapar_4215"/>
<dbReference type="eggNOG" id="COG0263">
    <property type="taxonomic scope" value="Bacteria"/>
</dbReference>
<dbReference type="HOGENOM" id="CLU_025400_2_0_4"/>
<dbReference type="OrthoDB" id="9804434at2"/>
<dbReference type="UniPathway" id="UPA00098">
    <property type="reaction ID" value="UER00359"/>
</dbReference>
<dbReference type="GO" id="GO:0005829">
    <property type="term" value="C:cytosol"/>
    <property type="evidence" value="ECO:0007669"/>
    <property type="project" value="TreeGrafter"/>
</dbReference>
<dbReference type="GO" id="GO:0005524">
    <property type="term" value="F:ATP binding"/>
    <property type="evidence" value="ECO:0007669"/>
    <property type="project" value="UniProtKB-KW"/>
</dbReference>
<dbReference type="GO" id="GO:0004349">
    <property type="term" value="F:glutamate 5-kinase activity"/>
    <property type="evidence" value="ECO:0007669"/>
    <property type="project" value="UniProtKB-UniRule"/>
</dbReference>
<dbReference type="GO" id="GO:0003723">
    <property type="term" value="F:RNA binding"/>
    <property type="evidence" value="ECO:0007669"/>
    <property type="project" value="InterPro"/>
</dbReference>
<dbReference type="GO" id="GO:0055129">
    <property type="term" value="P:L-proline biosynthetic process"/>
    <property type="evidence" value="ECO:0007669"/>
    <property type="project" value="UniProtKB-UniRule"/>
</dbReference>
<dbReference type="CDD" id="cd04242">
    <property type="entry name" value="AAK_G5K_ProB"/>
    <property type="match status" value="1"/>
</dbReference>
<dbReference type="CDD" id="cd21157">
    <property type="entry name" value="PUA_G5K"/>
    <property type="match status" value="1"/>
</dbReference>
<dbReference type="FunFam" id="3.40.1160.10:FF:000018">
    <property type="entry name" value="Glutamate 5-kinase"/>
    <property type="match status" value="1"/>
</dbReference>
<dbReference type="Gene3D" id="3.40.1160.10">
    <property type="entry name" value="Acetylglutamate kinase-like"/>
    <property type="match status" value="1"/>
</dbReference>
<dbReference type="Gene3D" id="2.30.130.10">
    <property type="entry name" value="PUA domain"/>
    <property type="match status" value="1"/>
</dbReference>
<dbReference type="HAMAP" id="MF_00456">
    <property type="entry name" value="ProB"/>
    <property type="match status" value="1"/>
</dbReference>
<dbReference type="InterPro" id="IPR036393">
    <property type="entry name" value="AceGlu_kinase-like_sf"/>
</dbReference>
<dbReference type="InterPro" id="IPR001048">
    <property type="entry name" value="Asp/Glu/Uridylate_kinase"/>
</dbReference>
<dbReference type="InterPro" id="IPR041739">
    <property type="entry name" value="G5K_ProB"/>
</dbReference>
<dbReference type="InterPro" id="IPR001057">
    <property type="entry name" value="Glu/AcGlu_kinase"/>
</dbReference>
<dbReference type="InterPro" id="IPR011529">
    <property type="entry name" value="Glu_5kinase"/>
</dbReference>
<dbReference type="InterPro" id="IPR005715">
    <property type="entry name" value="Glu_5kinase/COase_Synthase"/>
</dbReference>
<dbReference type="InterPro" id="IPR019797">
    <property type="entry name" value="Glutamate_5-kinase_CS"/>
</dbReference>
<dbReference type="InterPro" id="IPR002478">
    <property type="entry name" value="PUA"/>
</dbReference>
<dbReference type="InterPro" id="IPR015947">
    <property type="entry name" value="PUA-like_sf"/>
</dbReference>
<dbReference type="InterPro" id="IPR036974">
    <property type="entry name" value="PUA_sf"/>
</dbReference>
<dbReference type="NCBIfam" id="TIGR01027">
    <property type="entry name" value="proB"/>
    <property type="match status" value="1"/>
</dbReference>
<dbReference type="PANTHER" id="PTHR43654">
    <property type="entry name" value="GLUTAMATE 5-KINASE"/>
    <property type="match status" value="1"/>
</dbReference>
<dbReference type="PANTHER" id="PTHR43654:SF1">
    <property type="entry name" value="ISOPENTENYL PHOSPHATE KINASE"/>
    <property type="match status" value="1"/>
</dbReference>
<dbReference type="Pfam" id="PF00696">
    <property type="entry name" value="AA_kinase"/>
    <property type="match status" value="1"/>
</dbReference>
<dbReference type="Pfam" id="PF01472">
    <property type="entry name" value="PUA"/>
    <property type="match status" value="1"/>
</dbReference>
<dbReference type="PIRSF" id="PIRSF000729">
    <property type="entry name" value="GK"/>
    <property type="match status" value="1"/>
</dbReference>
<dbReference type="PRINTS" id="PR00474">
    <property type="entry name" value="GLU5KINASE"/>
</dbReference>
<dbReference type="SMART" id="SM00359">
    <property type="entry name" value="PUA"/>
    <property type="match status" value="1"/>
</dbReference>
<dbReference type="SUPFAM" id="SSF53633">
    <property type="entry name" value="Carbamate kinase-like"/>
    <property type="match status" value="1"/>
</dbReference>
<dbReference type="SUPFAM" id="SSF88697">
    <property type="entry name" value="PUA domain-like"/>
    <property type="match status" value="1"/>
</dbReference>
<dbReference type="PROSITE" id="PS00902">
    <property type="entry name" value="GLUTAMATE_5_KINASE"/>
    <property type="match status" value="1"/>
</dbReference>
<dbReference type="PROSITE" id="PS50890">
    <property type="entry name" value="PUA"/>
    <property type="match status" value="1"/>
</dbReference>
<feature type="chain" id="PRO_1000206279" description="Glutamate 5-kinase">
    <location>
        <begin position="1"/>
        <end position="379"/>
    </location>
</feature>
<feature type="domain" description="PUA" evidence="1">
    <location>
        <begin position="285"/>
        <end position="363"/>
    </location>
</feature>
<feature type="binding site" evidence="1">
    <location>
        <position position="19"/>
    </location>
    <ligand>
        <name>ATP</name>
        <dbReference type="ChEBI" id="CHEBI:30616"/>
    </ligand>
</feature>
<feature type="binding site" evidence="1">
    <location>
        <position position="59"/>
    </location>
    <ligand>
        <name>substrate</name>
    </ligand>
</feature>
<feature type="binding site" evidence="1">
    <location>
        <position position="146"/>
    </location>
    <ligand>
        <name>substrate</name>
    </ligand>
</feature>
<feature type="binding site" evidence="1">
    <location>
        <position position="158"/>
    </location>
    <ligand>
        <name>substrate</name>
    </ligand>
</feature>
<feature type="binding site" evidence="1">
    <location>
        <begin position="178"/>
        <end position="179"/>
    </location>
    <ligand>
        <name>ATP</name>
        <dbReference type="ChEBI" id="CHEBI:30616"/>
    </ligand>
</feature>
<organism>
    <name type="scientific">Variovorax paradoxus (strain S110)</name>
    <dbReference type="NCBI Taxonomy" id="543728"/>
    <lineage>
        <taxon>Bacteria</taxon>
        <taxon>Pseudomonadati</taxon>
        <taxon>Pseudomonadota</taxon>
        <taxon>Betaproteobacteria</taxon>
        <taxon>Burkholderiales</taxon>
        <taxon>Comamonadaceae</taxon>
        <taxon>Variovorax</taxon>
    </lineage>
</organism>
<sequence length="379" mass="40245">MTSNSGSTALRDARRIVVKVGSSLVTNEGRGLDEAAIGEWCRQLAVLVQGGREVVMVSSGAIAEGMKRLGWRTRPHEVHELQAAAAVGQMGLAQMYETKLRENRIGSAQVLLTHADLADRERYLNARSTLVTLLGLGVVPVINENDTVVNDEIKFGDNDTLGALVANLVEADALVILTDQKGLYTADPRKDPQAKFVHEAAAGDPALEAMAGGAGSSLGRGGMITKILAAKRAAGSGASTVIAWGREPDALLRLVRGESIGTLLVAQTAKHQARKRWMADHLQLRGAVTVDAGAAAKVRAEGKSLLPIGMTGVSGEFSRGDVIAVRDADGVELARGLANYSSVEARLLCRKPSSEFERLLGYVAEPEMVHRDNMVLMRG</sequence>
<gene>
    <name evidence="1" type="primary">proB</name>
    <name type="ordered locus">Vapar_4215</name>
</gene>